<name>FMAA_ASPFU</name>
<proteinExistence type="evidence at protein level"/>
<gene>
    <name evidence="12" type="primary">af520</name>
    <name evidence="13" type="synonym">fmaA</name>
    <name type="ORF">AFUA_8G00520</name>
</gene>
<protein>
    <recommendedName>
        <fullName evidence="12">Fumagillin beta-trans-bergamotene synthase af520</fullName>
        <ecNumber evidence="5">4.2.3.211</ecNumber>
    </recommendedName>
    <alternativeName>
        <fullName evidence="14">(+)-exo-beta-bergamotene synthase</fullName>
    </alternativeName>
    <alternativeName>
        <fullName evidence="12">Fumagillin biosynthesis terpene cyclase</fullName>
        <shortName evidence="12">Fma-TC</shortName>
    </alternativeName>
</protein>
<sequence length="289" mass="31676">MDRVLSLGKLPISFLKTLYLFSKSDIPAATLPSMAVALVLAAPCSFHLIIKGFLWNQLHLLTFQVKNQIDGIDEDSIAKPHRPLPSGRITPGQATLLYRVLFFLMWVAAVYTNTISCTLVYSIAIVVYNEGGLAAIPVVKNLIGAIGLGCYCWGTTIIFDGGKELHGLKAVAVLMIVGIFATTGHAQDFRDRTADATRGRKTIPLLLSQPVARWSLATITAAWTIGLIALWKPPAIVTLAYVAASLRCLDGFLSSYDEKDDYVSYCWYGFWLLGSNILPIFPRLRGELP</sequence>
<keyword id="KW-0456">Lyase</keyword>
<keyword id="KW-0472">Membrane</keyword>
<keyword id="KW-1185">Reference proteome</keyword>
<keyword id="KW-0812">Transmembrane</keyword>
<keyword id="KW-1133">Transmembrane helix</keyword>
<evidence type="ECO:0000255" key="1"/>
<evidence type="ECO:0000269" key="2">
    <source>
    </source>
</evidence>
<evidence type="ECO:0000269" key="3">
    <source>
    </source>
</evidence>
<evidence type="ECO:0000269" key="4">
    <source>
    </source>
</evidence>
<evidence type="ECO:0000269" key="5">
    <source>
    </source>
</evidence>
<evidence type="ECO:0000269" key="6">
    <source>
    </source>
</evidence>
<evidence type="ECO:0000269" key="7">
    <source>
    </source>
</evidence>
<evidence type="ECO:0000269" key="8">
    <source>
    </source>
</evidence>
<evidence type="ECO:0000269" key="9">
    <source>
    </source>
</evidence>
<evidence type="ECO:0000269" key="10">
    <source>
    </source>
</evidence>
<evidence type="ECO:0000269" key="11">
    <source>
    </source>
</evidence>
<evidence type="ECO:0000303" key="12">
    <source>
    </source>
</evidence>
<evidence type="ECO:0000303" key="13">
    <source>
    </source>
</evidence>
<evidence type="ECO:0000305" key="14"/>
<evidence type="ECO:0000305" key="15">
    <source>
    </source>
</evidence>
<comment type="function">
    <text evidence="5 8 10 15">Beta-trans-bergamotene synthase; part of the gene cluster that mediates the biosynthesis of fumagillin, a meroterpenoid that has numerous biological activities including irreversible inhibition of human type 2 methionine aminopeptidase (METAP2) (PubMed:23488861, PubMed:24568283, PubMed:34829223). Within the pathway, the membrane-bound fumagillin beta-trans-bergamotene synthase af520 converts farnesyl pyrophosphate (FPP) to beta-trans-bergamotene (PubMed:23488861). The pathway begins with the conversion of FPP to beta-trans-bergamotene by af520. The multifunctional cytochrome P450 monooxygenase af510 then converts beta-trans-bergamotene into 5-keto-demethoxyfumagillol via several oxydation steps. 5-keto-demethoxyfumagillol is then subjected to successive C-6 hydroxylation and O-methylation by the dioxygenase af480 and O-methyltransferase af390-400, respectively, to yield 5-keto-fumagillol, which is then stereoselectively reduced by the keto-reductase af490 to 5R-hydroxy-seco-sesquiterpene. The next step is the polyketide transferase af380-catalyzed transfer of a dodecapentaenoyl group synthesized by the polyketide synthase af370 onto 5R-hydroxy-seco-sesquiterpene which leads to the production of prefumagillin. Finally, oxidative cleavage by the monooxygenase af470 converts prefumagillin to fumagillin (Probable) (PubMed:24568283).</text>
</comment>
<comment type="catalytic activity">
    <reaction evidence="5">
        <text>(2E,6E)-farnesyl diphosphate = (+)-exo-beta-bergamotene + diphosphate</text>
        <dbReference type="Rhea" id="RHEA:74587"/>
        <dbReference type="ChEBI" id="CHEBI:33019"/>
        <dbReference type="ChEBI" id="CHEBI:175763"/>
        <dbReference type="ChEBI" id="CHEBI:193166"/>
        <dbReference type="EC" id="4.2.3.211"/>
    </reaction>
    <physiologicalReaction direction="left-to-right" evidence="5">
        <dbReference type="Rhea" id="RHEA:74588"/>
    </physiologicalReaction>
</comment>
<comment type="pathway">
    <text evidence="5">Secondary metabolite biosynthesis; terpenoid biosynthesis.</text>
</comment>
<comment type="subcellular location">
    <subcellularLocation>
        <location evidence="1">Membrane</location>
        <topology evidence="1">Multi-pass membrane protein</topology>
    </subcellularLocation>
</comment>
<comment type="induction">
    <text evidence="6 7">Expression is controlled by the fumagillin biosynthesis cluster regulator fumR (PubMed:24082142). Expression is also under the control of the developmental and secondary metabolism regulator veA (PubMed:24116213).</text>
</comment>
<comment type="disruption phenotype">
    <text evidence="6 9 10">Completely abolishes the production of fumagillin and decreases virulence.</text>
</comment>
<comment type="biotechnology">
    <text evidence="2 3 4 11">Fumagillin and its derivatives have been intensely studied for their potential use in the treatment of amebiasis, microsporidiosis and rheumatoid arthritis (PubMed:12075057, PubMed:14913169, PubMed:18209961). They have also interesting antiangiogenic properties by the irreversible inhibition of human type 2 methionine aminopeptidase (METAP2) (PubMed:9177176).</text>
</comment>
<comment type="similarity">
    <text evidence="14">Belongs to the paxB family.</text>
</comment>
<comment type="sequence caution" evidence="14">
    <conflict type="erroneous gene model prediction">
        <sequence resource="EMBL-CDS" id="EAL85115"/>
    </conflict>
</comment>
<feature type="chain" id="PRO_0000437038" description="Fumagillin beta-trans-bergamotene synthase af520">
    <location>
        <begin position="1"/>
        <end position="289"/>
    </location>
</feature>
<feature type="transmembrane region" description="Helical" evidence="1">
    <location>
        <begin position="35"/>
        <end position="55"/>
    </location>
</feature>
<feature type="transmembrane region" description="Helical" evidence="1">
    <location>
        <begin position="95"/>
        <end position="115"/>
    </location>
</feature>
<feature type="transmembrane region" description="Helical" evidence="1">
    <location>
        <begin position="142"/>
        <end position="162"/>
    </location>
</feature>
<feature type="transmembrane region" description="Helical" evidence="1">
    <location>
        <begin position="165"/>
        <end position="185"/>
    </location>
</feature>
<feature type="transmembrane region" description="Helical" evidence="1">
    <location>
        <begin position="222"/>
        <end position="242"/>
    </location>
</feature>
<feature type="transmembrane region" description="Helical" evidence="1">
    <location>
        <begin position="262"/>
        <end position="282"/>
    </location>
</feature>
<organism>
    <name type="scientific">Aspergillus fumigatus (strain ATCC MYA-4609 / CBS 101355 / FGSC A1100 / Af293)</name>
    <name type="common">Neosartorya fumigata</name>
    <dbReference type="NCBI Taxonomy" id="330879"/>
    <lineage>
        <taxon>Eukaryota</taxon>
        <taxon>Fungi</taxon>
        <taxon>Dikarya</taxon>
        <taxon>Ascomycota</taxon>
        <taxon>Pezizomycotina</taxon>
        <taxon>Eurotiomycetes</taxon>
        <taxon>Eurotiomycetidae</taxon>
        <taxon>Eurotiales</taxon>
        <taxon>Aspergillaceae</taxon>
        <taxon>Aspergillus</taxon>
        <taxon>Aspergillus subgen. Fumigati</taxon>
    </lineage>
</organism>
<dbReference type="EC" id="4.2.3.211" evidence="5"/>
<dbReference type="EMBL" id="KC407776">
    <property type="protein sequence ID" value="AGI05042.1"/>
    <property type="molecule type" value="mRNA"/>
</dbReference>
<dbReference type="EMBL" id="AAHF01000014">
    <property type="protein sequence ID" value="EAL85115.1"/>
    <property type="status" value="ALT_SEQ"/>
    <property type="molecule type" value="Genomic_DNA"/>
</dbReference>
<dbReference type="RefSeq" id="XP_747153.1">
    <property type="nucleotide sequence ID" value="XM_742060.1"/>
</dbReference>
<dbReference type="STRING" id="330879.M4VQY9"/>
<dbReference type="GeneID" id="3504512"/>
<dbReference type="KEGG" id="afm:AFUA_8G00520"/>
<dbReference type="VEuPathDB" id="FungiDB:Afu8g00520"/>
<dbReference type="eggNOG" id="ENOG502RZB9">
    <property type="taxonomic scope" value="Eukaryota"/>
</dbReference>
<dbReference type="InParanoid" id="M4VQY9"/>
<dbReference type="OrthoDB" id="434972at2759"/>
<dbReference type="BioCyc" id="MetaCyc:MONOMER-124249"/>
<dbReference type="UniPathway" id="UPA00213"/>
<dbReference type="Proteomes" id="UP000002530">
    <property type="component" value="Chromosome 8"/>
</dbReference>
<dbReference type="GO" id="GO:0016020">
    <property type="term" value="C:membrane"/>
    <property type="evidence" value="ECO:0007669"/>
    <property type="project" value="UniProtKB-SubCell"/>
</dbReference>
<dbReference type="GO" id="GO:0016829">
    <property type="term" value="F:lyase activity"/>
    <property type="evidence" value="ECO:0007669"/>
    <property type="project" value="UniProtKB-KW"/>
</dbReference>
<dbReference type="GO" id="GO:0016765">
    <property type="term" value="F:transferase activity, transferring alkyl or aryl (other than methyl) groups"/>
    <property type="evidence" value="ECO:0007669"/>
    <property type="project" value="InterPro"/>
</dbReference>
<dbReference type="GO" id="GO:1902086">
    <property type="term" value="P:fumagillin biosynthetic process"/>
    <property type="evidence" value="ECO:0000315"/>
    <property type="project" value="AspGD"/>
</dbReference>
<dbReference type="GO" id="GO:0016114">
    <property type="term" value="P:terpenoid biosynthetic process"/>
    <property type="evidence" value="ECO:0007669"/>
    <property type="project" value="UniProtKB-UniPathway"/>
</dbReference>
<dbReference type="CDD" id="cd13965">
    <property type="entry name" value="PT_UbiA_3"/>
    <property type="match status" value="1"/>
</dbReference>
<dbReference type="Gene3D" id="1.10.357.140">
    <property type="entry name" value="UbiA prenyltransferase"/>
    <property type="match status" value="1"/>
</dbReference>
<dbReference type="InterPro" id="IPR050475">
    <property type="entry name" value="Prenyltransferase_related"/>
</dbReference>
<dbReference type="InterPro" id="IPR000537">
    <property type="entry name" value="UbiA_prenyltransferase"/>
</dbReference>
<dbReference type="InterPro" id="IPR044878">
    <property type="entry name" value="UbiA_sf"/>
</dbReference>
<dbReference type="PANTHER" id="PTHR42723">
    <property type="entry name" value="CHLOROPHYLL SYNTHASE"/>
    <property type="match status" value="1"/>
</dbReference>
<dbReference type="PANTHER" id="PTHR42723:SF1">
    <property type="entry name" value="CHLOROPHYLL SYNTHASE, CHLOROPLASTIC"/>
    <property type="match status" value="1"/>
</dbReference>
<dbReference type="Pfam" id="PF01040">
    <property type="entry name" value="UbiA"/>
    <property type="match status" value="1"/>
</dbReference>
<accession>M4VQY9</accession>
<accession>Q4WAZ7</accession>
<reference key="1">
    <citation type="journal article" date="2013" name="J. Am. Chem. Soc.">
        <title>The fumagillin biosynthetic gene cluster in Aspergillus fumigatus encodes a cryptic terpene cyclase involved in the formation of beta-trans-bergamotene.</title>
        <authorList>
            <person name="Lin H.C."/>
            <person name="Chooi Y.H."/>
            <person name="Dhingra S."/>
            <person name="Xu W."/>
            <person name="Calvo A.M."/>
            <person name="Tang Y."/>
        </authorList>
    </citation>
    <scope>NUCLEOTIDE SEQUENCE [MRNA]</scope>
    <scope>FUNCTION</scope>
    <scope>CATALYTIC ACTIVITY</scope>
    <source>
        <strain>ATCC MYA-4609 / CBS 101355 / FGSC A1100 / Af293</strain>
    </source>
</reference>
<reference key="2">
    <citation type="journal article" date="2005" name="Nature">
        <title>Genomic sequence of the pathogenic and allergenic filamentous fungus Aspergillus fumigatus.</title>
        <authorList>
            <person name="Nierman W.C."/>
            <person name="Pain A."/>
            <person name="Anderson M.J."/>
            <person name="Wortman J.R."/>
            <person name="Kim H.S."/>
            <person name="Arroyo J."/>
            <person name="Berriman M."/>
            <person name="Abe K."/>
            <person name="Archer D.B."/>
            <person name="Bermejo C."/>
            <person name="Bennett J.W."/>
            <person name="Bowyer P."/>
            <person name="Chen D."/>
            <person name="Collins M."/>
            <person name="Coulsen R."/>
            <person name="Davies R."/>
            <person name="Dyer P.S."/>
            <person name="Farman M.L."/>
            <person name="Fedorova N."/>
            <person name="Fedorova N.D."/>
            <person name="Feldblyum T.V."/>
            <person name="Fischer R."/>
            <person name="Fosker N."/>
            <person name="Fraser A."/>
            <person name="Garcia J.L."/>
            <person name="Garcia M.J."/>
            <person name="Goble A."/>
            <person name="Goldman G.H."/>
            <person name="Gomi K."/>
            <person name="Griffith-Jones S."/>
            <person name="Gwilliam R."/>
            <person name="Haas B.J."/>
            <person name="Haas H."/>
            <person name="Harris D.E."/>
            <person name="Horiuchi H."/>
            <person name="Huang J."/>
            <person name="Humphray S."/>
            <person name="Jimenez J."/>
            <person name="Keller N."/>
            <person name="Khouri H."/>
            <person name="Kitamoto K."/>
            <person name="Kobayashi T."/>
            <person name="Konzack S."/>
            <person name="Kulkarni R."/>
            <person name="Kumagai T."/>
            <person name="Lafton A."/>
            <person name="Latge J.-P."/>
            <person name="Li W."/>
            <person name="Lord A."/>
            <person name="Lu C."/>
            <person name="Majoros W.H."/>
            <person name="May G.S."/>
            <person name="Miller B.L."/>
            <person name="Mohamoud Y."/>
            <person name="Molina M."/>
            <person name="Monod M."/>
            <person name="Mouyna I."/>
            <person name="Mulligan S."/>
            <person name="Murphy L.D."/>
            <person name="O'Neil S."/>
            <person name="Paulsen I."/>
            <person name="Penalva M.A."/>
            <person name="Pertea M."/>
            <person name="Price C."/>
            <person name="Pritchard B.L."/>
            <person name="Quail M.A."/>
            <person name="Rabbinowitsch E."/>
            <person name="Rawlins N."/>
            <person name="Rajandream M.A."/>
            <person name="Reichard U."/>
            <person name="Renauld H."/>
            <person name="Robson G.D."/>
            <person name="Rodriguez de Cordoba S."/>
            <person name="Rodriguez-Pena J.M."/>
            <person name="Ronning C.M."/>
            <person name="Rutter S."/>
            <person name="Salzberg S.L."/>
            <person name="Sanchez M."/>
            <person name="Sanchez-Ferrero J.C."/>
            <person name="Saunders D."/>
            <person name="Seeger K."/>
            <person name="Squares R."/>
            <person name="Squares S."/>
            <person name="Takeuchi M."/>
            <person name="Tekaia F."/>
            <person name="Turner G."/>
            <person name="Vazquez de Aldana C.R."/>
            <person name="Weidman J."/>
            <person name="White O."/>
            <person name="Woodward J.R."/>
            <person name="Yu J.-H."/>
            <person name="Fraser C.M."/>
            <person name="Galagan J.E."/>
            <person name="Asai K."/>
            <person name="Machida M."/>
            <person name="Hall N."/>
            <person name="Barrell B.G."/>
            <person name="Denning D.W."/>
        </authorList>
    </citation>
    <scope>NUCLEOTIDE SEQUENCE [LARGE SCALE GENOMIC DNA]</scope>
    <source>
        <strain>ATCC MYA-4609 / CBS 101355 / FGSC A1100 / Af293</strain>
    </source>
</reference>
<reference key="3">
    <citation type="journal article" date="1952" name="Science">
        <title>The treatment of amebiasis with fumagillin.</title>
        <authorList>
            <person name="Killough J.H."/>
            <person name="Magill G.B."/>
            <person name="Smith R.C."/>
        </authorList>
    </citation>
    <scope>BIOTECHNOLOGY</scope>
</reference>
<reference key="4">
    <citation type="journal article" date="1997" name="Proc. Natl. Acad. Sci. U.S.A.">
        <title>The anti-angiogenic agent fumagillin covalently binds and inhibits the methionine aminopeptidase, MetAP-2.</title>
        <authorList>
            <person name="Sin N."/>
            <person name="Meng L."/>
            <person name="Wang M.Q."/>
            <person name="Wen J.J."/>
            <person name="Bornmann W.G."/>
            <person name="Crews C.M."/>
        </authorList>
    </citation>
    <scope>BIOTECHNOLOGY</scope>
</reference>
<reference key="5">
    <citation type="journal article" date="2002" name="N. Engl. J. Med.">
        <title>Fumagillin treatment of intestinal microsporidiosis.</title>
        <authorList>
            <consortium name="Agence Nationale de Recherches sur le SIDA 090 Study Group"/>
            <person name="Molina J.M."/>
            <person name="Tourneur M."/>
            <person name="Sarfati C."/>
            <person name="Chevret S."/>
            <person name="de Gouvello A."/>
            <person name="Gobert J.G."/>
            <person name="Balkan S."/>
            <person name="Derouin F."/>
        </authorList>
    </citation>
    <scope>BIOTECHNOLOGY</scope>
</reference>
<reference key="6">
    <citation type="journal article" date="2008" name="Inflamm. Res.">
        <title>An inhibitor of methionine aminopeptidase type-2, PPI-2458, ameliorates the pathophysiological disease processes of rheumatoid arthritis.</title>
        <authorList>
            <person name="Lazarus D.D."/>
            <person name="Doyle E.G."/>
            <person name="Bernier S.G."/>
            <person name="Rogers A.B."/>
            <person name="Labenski M.T."/>
            <person name="Wakefield J.D."/>
            <person name="Karp R.M."/>
            <person name="Clark E.J."/>
            <person name="Lorusso J."/>
            <person name="Hoyt J.G."/>
            <person name="Thompson C.D."/>
            <person name="Hannig G."/>
            <person name="Westlin W.F."/>
        </authorList>
    </citation>
    <scope>BIOTECHNOLOGY</scope>
</reference>
<reference key="7">
    <citation type="journal article" date="2013" name="PLoS ONE">
        <title>The fumagillin gene cluster, an example of hundreds of genes under veA control in Aspergillus fumigatus.</title>
        <authorList>
            <person name="Dhingra S."/>
            <person name="Lind A.L."/>
            <person name="Lin H.C."/>
            <person name="Tang Y."/>
            <person name="Rokas A."/>
            <person name="Calvo A.M."/>
        </authorList>
    </citation>
    <scope>INDUCTION</scope>
</reference>
<reference key="8">
    <citation type="journal article" date="2013" name="Proc. Natl. Acad. Sci. U.S.A.">
        <title>Prototype of an intertwined secondary-metabolite supercluster.</title>
        <authorList>
            <person name="Wiemann P."/>
            <person name="Guo C.J."/>
            <person name="Palmer J.M."/>
            <person name="Sekonyela R."/>
            <person name="Wang C.C."/>
            <person name="Keller N.P."/>
        </authorList>
    </citation>
    <scope>IDENTIFICATION</scope>
    <scope>INDUCTION</scope>
    <scope>DISRUPTION PHENOTYPE</scope>
</reference>
<reference key="9">
    <citation type="journal article" date="2014" name="J. Am. Chem. Soc.">
        <title>Generation of complexity in fungal terpene biosynthesis: discovery of a multifunctional cytochrome P450 in the fumagillin pathway.</title>
        <authorList>
            <person name="Lin H.C."/>
            <person name="Tsunematsu Y."/>
            <person name="Dhingra S."/>
            <person name="Xu W."/>
            <person name="Fukutomi M."/>
            <person name="Chooi Y.H."/>
            <person name="Cane D.E."/>
            <person name="Calvo A.M."/>
            <person name="Watanabe K."/>
            <person name="Tang Y."/>
        </authorList>
    </citation>
    <scope>FUNCTION</scope>
</reference>
<reference key="10">
    <citation type="journal article" date="2018" name="Virulence">
        <title>A possible role for fumagillin in cellular damage during host infection by Aspergillus fumigatus.</title>
        <authorList>
            <person name="Guruceaga X."/>
            <person name="Ezpeleta G."/>
            <person name="Mayayo E."/>
            <person name="Sueiro-Olivares M."/>
            <person name="Abad-Diaz-De-Cerio A."/>
            <person name="Aguirre Urizar J.M."/>
            <person name="Liu H.G."/>
            <person name="Wiemann P."/>
            <person name="Bok J.W."/>
            <person name="Filler S.G."/>
            <person name="Keller N.P."/>
            <person name="Hernando F.L."/>
            <person name="Ramirez-Garcia A."/>
            <person name="Rementeria A."/>
        </authorList>
    </citation>
    <scope>DISRUPTION PHENOTYPE</scope>
</reference>
<reference key="11">
    <citation type="journal article" date="2021" name="J. Fungi">
        <title>Aspergillus fumigatus fumagillin contributes to host cell damage.</title>
        <authorList>
            <person name="Guruceaga X."/>
            <person name="Perez-Cuesta U."/>
            <person name="Pellon A."/>
            <person name="Cendon-Sanchez S."/>
            <person name="Pelegri-Martinez E."/>
            <person name="Gonzalez O."/>
            <person name="Hernando F.L."/>
            <person name="Mayayo E."/>
            <person name="Anguita J."/>
            <person name="Alonso R.M."/>
            <person name="Keller N.P."/>
            <person name="Ramirez-Garcia A."/>
            <person name="Rementeria A."/>
        </authorList>
    </citation>
    <scope>FUNCTION</scope>
    <scope>DISRUPTION PHENOTYPE</scope>
</reference>